<proteinExistence type="evidence at protein level"/>
<gene>
    <name evidence="4" type="primary">BG1</name>
    <name evidence="7" type="ordered locus">Os03g0175800</name>
    <name evidence="6" type="ordered locus">LOC_Os03g07920</name>
    <name evidence="8" type="ORF">OsJ_09620</name>
</gene>
<accession>Q10R09</accession>
<accession>A0A0P0VTW4</accession>
<protein>
    <recommendedName>
        <fullName evidence="4">Protein BIG GRAIN 1</fullName>
    </recommendedName>
</protein>
<evidence type="ECO:0000255" key="1"/>
<evidence type="ECO:0000256" key="2">
    <source>
        <dbReference type="SAM" id="MobiDB-lite"/>
    </source>
</evidence>
<evidence type="ECO:0000269" key="3">
    <source>
    </source>
</evidence>
<evidence type="ECO:0000303" key="4">
    <source>
    </source>
</evidence>
<evidence type="ECO:0000305" key="5"/>
<evidence type="ECO:0000312" key="6">
    <source>
        <dbReference type="EMBL" id="ABF94260.1"/>
    </source>
</evidence>
<evidence type="ECO:0000312" key="7">
    <source>
        <dbReference type="EMBL" id="BAF11049.1"/>
    </source>
</evidence>
<evidence type="ECO:0000312" key="8">
    <source>
        <dbReference type="EMBL" id="EEE58421.1"/>
    </source>
</evidence>
<evidence type="ECO:0000312" key="9">
    <source>
        <dbReference type="Proteomes" id="UP000059680"/>
    </source>
</evidence>
<sequence length="310" mass="32803">MERWAAPKVTAGSARRYVADQPSFSSTLLDAIYKSMDEQPGHGGGATGVEAVAAAAKKQHEAALHYGNYYKPSLAGSYRARAPGPHATTSSSSECSSYGGFSSSEAESSHHRRLRPIRTTVPGGAPGPAPEKKAKKPGASIRAKLRDLRKPASPGARLAGFLNSIFAGKRAPATPPSATAGAESACSTASSYSRSCLSKTPSTRGQAKRTVRFLDSDTESLASSTVVDRRRVPVEAVQQMLLQRMEMESDEDDDESSDASSDLFELENFAAIAPAGAAYRDELPVYETTRVALNRAIGHGYGHGRSARVV</sequence>
<organism evidence="9">
    <name type="scientific">Oryza sativa subsp. japonica</name>
    <name type="common">Rice</name>
    <dbReference type="NCBI Taxonomy" id="39947"/>
    <lineage>
        <taxon>Eukaryota</taxon>
        <taxon>Viridiplantae</taxon>
        <taxon>Streptophyta</taxon>
        <taxon>Embryophyta</taxon>
        <taxon>Tracheophyta</taxon>
        <taxon>Spermatophyta</taxon>
        <taxon>Magnoliopsida</taxon>
        <taxon>Liliopsida</taxon>
        <taxon>Poales</taxon>
        <taxon>Poaceae</taxon>
        <taxon>BOP clade</taxon>
        <taxon>Oryzoideae</taxon>
        <taxon>Oryzeae</taxon>
        <taxon>Oryzinae</taxon>
        <taxon>Oryza</taxon>
        <taxon>Oryza sativa</taxon>
    </lineage>
</organism>
<reference key="1">
    <citation type="journal article" date="2005" name="Genome Res.">
        <title>Sequence, annotation, and analysis of synteny between rice chromosome 3 and diverged grass species.</title>
        <authorList>
            <consortium name="The rice chromosome 3 sequencing consortium"/>
            <person name="Buell C.R."/>
            <person name="Yuan Q."/>
            <person name="Ouyang S."/>
            <person name="Liu J."/>
            <person name="Zhu W."/>
            <person name="Wang A."/>
            <person name="Maiti R."/>
            <person name="Haas B."/>
            <person name="Wortman J."/>
            <person name="Pertea M."/>
            <person name="Jones K.M."/>
            <person name="Kim M."/>
            <person name="Overton L."/>
            <person name="Tsitrin T."/>
            <person name="Fadrosh D."/>
            <person name="Bera J."/>
            <person name="Weaver B."/>
            <person name="Jin S."/>
            <person name="Johri S."/>
            <person name="Reardon M."/>
            <person name="Webb K."/>
            <person name="Hill J."/>
            <person name="Moffat K."/>
            <person name="Tallon L."/>
            <person name="Van Aken S."/>
            <person name="Lewis M."/>
            <person name="Utterback T."/>
            <person name="Feldblyum T."/>
            <person name="Zismann V."/>
            <person name="Iobst S."/>
            <person name="Hsiao J."/>
            <person name="de Vazeille A.R."/>
            <person name="Salzberg S.L."/>
            <person name="White O."/>
            <person name="Fraser C.M."/>
            <person name="Yu Y."/>
            <person name="Kim H."/>
            <person name="Rambo T."/>
            <person name="Currie J."/>
            <person name="Collura K."/>
            <person name="Kernodle-Thompson S."/>
            <person name="Wei F."/>
            <person name="Kudrna K."/>
            <person name="Ammiraju J.S.S."/>
            <person name="Luo M."/>
            <person name="Goicoechea J.L."/>
            <person name="Wing R.A."/>
            <person name="Henry D."/>
            <person name="Oates R."/>
            <person name="Palmer M."/>
            <person name="Pries G."/>
            <person name="Saski C."/>
            <person name="Simmons J."/>
            <person name="Soderlund C."/>
            <person name="Nelson W."/>
            <person name="de la Bastide M."/>
            <person name="Spiegel L."/>
            <person name="Nascimento L."/>
            <person name="Huang E."/>
            <person name="Preston R."/>
            <person name="Zutavern T."/>
            <person name="Palmer L."/>
            <person name="O'Shaughnessy A."/>
            <person name="Dike S."/>
            <person name="McCombie W.R."/>
            <person name="Minx P."/>
            <person name="Cordum H."/>
            <person name="Wilson R."/>
            <person name="Jin W."/>
            <person name="Lee H.R."/>
            <person name="Jiang J."/>
            <person name="Jackson S."/>
        </authorList>
    </citation>
    <scope>NUCLEOTIDE SEQUENCE [LARGE SCALE GENOMIC DNA]</scope>
    <source>
        <strain>cv. Nipponbare</strain>
    </source>
</reference>
<reference key="2">
    <citation type="journal article" date="2005" name="Nature">
        <title>The map-based sequence of the rice genome.</title>
        <authorList>
            <consortium name="International rice genome sequencing project (IRGSP)"/>
        </authorList>
    </citation>
    <scope>NUCLEOTIDE SEQUENCE [LARGE SCALE GENOMIC DNA]</scope>
    <source>
        <strain>cv. Nipponbare</strain>
    </source>
</reference>
<reference key="3">
    <citation type="journal article" date="2008" name="Nucleic Acids Res.">
        <title>The rice annotation project database (RAP-DB): 2008 update.</title>
        <authorList>
            <consortium name="The rice annotation project (RAP)"/>
        </authorList>
    </citation>
    <scope>GENOME REANNOTATION</scope>
    <source>
        <strain>cv. Nipponbare</strain>
    </source>
</reference>
<reference key="4">
    <citation type="journal article" date="2013" name="Rice">
        <title>Improvement of the Oryza sativa Nipponbare reference genome using next generation sequence and optical map data.</title>
        <authorList>
            <person name="Kawahara Y."/>
            <person name="de la Bastide M."/>
            <person name="Hamilton J.P."/>
            <person name="Kanamori H."/>
            <person name="McCombie W.R."/>
            <person name="Ouyang S."/>
            <person name="Schwartz D.C."/>
            <person name="Tanaka T."/>
            <person name="Wu J."/>
            <person name="Zhou S."/>
            <person name="Childs K.L."/>
            <person name="Davidson R.M."/>
            <person name="Lin H."/>
            <person name="Quesada-Ocampo L."/>
            <person name="Vaillancourt B."/>
            <person name="Sakai H."/>
            <person name="Lee S.S."/>
            <person name="Kim J."/>
            <person name="Numa H."/>
            <person name="Itoh T."/>
            <person name="Buell C.R."/>
            <person name="Matsumoto T."/>
        </authorList>
    </citation>
    <scope>GENOME REANNOTATION</scope>
    <source>
        <strain>cv. Nipponbare</strain>
    </source>
</reference>
<reference key="5">
    <citation type="journal article" date="2005" name="PLoS Biol.">
        <title>The genomes of Oryza sativa: a history of duplications.</title>
        <authorList>
            <person name="Yu J."/>
            <person name="Wang J."/>
            <person name="Lin W."/>
            <person name="Li S."/>
            <person name="Li H."/>
            <person name="Zhou J."/>
            <person name="Ni P."/>
            <person name="Dong W."/>
            <person name="Hu S."/>
            <person name="Zeng C."/>
            <person name="Zhang J."/>
            <person name="Zhang Y."/>
            <person name="Li R."/>
            <person name="Xu Z."/>
            <person name="Li S."/>
            <person name="Li X."/>
            <person name="Zheng H."/>
            <person name="Cong L."/>
            <person name="Lin L."/>
            <person name="Yin J."/>
            <person name="Geng J."/>
            <person name="Li G."/>
            <person name="Shi J."/>
            <person name="Liu J."/>
            <person name="Lv H."/>
            <person name="Li J."/>
            <person name="Wang J."/>
            <person name="Deng Y."/>
            <person name="Ran L."/>
            <person name="Shi X."/>
            <person name="Wang X."/>
            <person name="Wu Q."/>
            <person name="Li C."/>
            <person name="Ren X."/>
            <person name="Wang J."/>
            <person name="Wang X."/>
            <person name="Li D."/>
            <person name="Liu D."/>
            <person name="Zhang X."/>
            <person name="Ji Z."/>
            <person name="Zhao W."/>
            <person name="Sun Y."/>
            <person name="Zhang Z."/>
            <person name="Bao J."/>
            <person name="Han Y."/>
            <person name="Dong L."/>
            <person name="Ji J."/>
            <person name="Chen P."/>
            <person name="Wu S."/>
            <person name="Liu J."/>
            <person name="Xiao Y."/>
            <person name="Bu D."/>
            <person name="Tan J."/>
            <person name="Yang L."/>
            <person name="Ye C."/>
            <person name="Zhang J."/>
            <person name="Xu J."/>
            <person name="Zhou Y."/>
            <person name="Yu Y."/>
            <person name="Zhang B."/>
            <person name="Zhuang S."/>
            <person name="Wei H."/>
            <person name="Liu B."/>
            <person name="Lei M."/>
            <person name="Yu H."/>
            <person name="Li Y."/>
            <person name="Xu H."/>
            <person name="Wei S."/>
            <person name="He X."/>
            <person name="Fang L."/>
            <person name="Zhang Z."/>
            <person name="Zhang Y."/>
            <person name="Huang X."/>
            <person name="Su Z."/>
            <person name="Tong W."/>
            <person name="Li J."/>
            <person name="Tong Z."/>
            <person name="Li S."/>
            <person name="Ye J."/>
            <person name="Wang L."/>
            <person name="Fang L."/>
            <person name="Lei T."/>
            <person name="Chen C.-S."/>
            <person name="Chen H.-C."/>
            <person name="Xu Z."/>
            <person name="Li H."/>
            <person name="Huang H."/>
            <person name="Zhang F."/>
            <person name="Xu H."/>
            <person name="Li N."/>
            <person name="Zhao C."/>
            <person name="Li S."/>
            <person name="Dong L."/>
            <person name="Huang Y."/>
            <person name="Li L."/>
            <person name="Xi Y."/>
            <person name="Qi Q."/>
            <person name="Li W."/>
            <person name="Zhang B."/>
            <person name="Hu W."/>
            <person name="Zhang Y."/>
            <person name="Tian X."/>
            <person name="Jiao Y."/>
            <person name="Liang X."/>
            <person name="Jin J."/>
            <person name="Gao L."/>
            <person name="Zheng W."/>
            <person name="Hao B."/>
            <person name="Liu S.-M."/>
            <person name="Wang W."/>
            <person name="Yuan L."/>
            <person name="Cao M."/>
            <person name="McDermott J."/>
            <person name="Samudrala R."/>
            <person name="Wang J."/>
            <person name="Wong G.K.-S."/>
            <person name="Yang H."/>
        </authorList>
    </citation>
    <scope>NUCLEOTIDE SEQUENCE [LARGE SCALE GENOMIC DNA]</scope>
    <source>
        <strain>cv. Nipponbare</strain>
    </source>
</reference>
<reference key="6">
    <citation type="journal article" date="2003" name="Science">
        <title>Collection, mapping, and annotation of over 28,000 cDNA clones from japonica rice.</title>
        <authorList>
            <consortium name="The rice full-length cDNA consortium"/>
        </authorList>
    </citation>
    <scope>NUCLEOTIDE SEQUENCE [LARGE SCALE MRNA]</scope>
    <source>
        <strain>cv. Nipponbare</strain>
    </source>
</reference>
<reference key="7">
    <citation type="journal article" date="2015" name="Proc. Natl. Acad. Sci. U.S.A.">
        <title>Activation of Big Grain1 significantly improves grain size by regulating auxin transport in rice.</title>
        <authorList>
            <person name="Liu L."/>
            <person name="Tong H."/>
            <person name="Xiao Y."/>
            <person name="Che R."/>
            <person name="Xu F."/>
            <person name="Hu B."/>
            <person name="Liang C."/>
            <person name="Chu J."/>
            <person name="Li J."/>
            <person name="Chu C."/>
        </authorList>
    </citation>
    <scope>FUNCTION</scope>
    <scope>DISRUPTION PHENOTYPE</scope>
    <scope>INDUCTION BY AUXIN</scope>
    <scope>TISSUE SPECIFICITY</scope>
    <scope>SUBCELLULAR LOCATION</scope>
    <source>
        <strain>cv. Nipponbare</strain>
    </source>
</reference>
<dbReference type="EMBL" id="DP000009">
    <property type="protein sequence ID" value="ABF94260.1"/>
    <property type="molecule type" value="Genomic_DNA"/>
</dbReference>
<dbReference type="EMBL" id="AP008209">
    <property type="protein sequence ID" value="BAF11049.1"/>
    <property type="molecule type" value="Genomic_DNA"/>
</dbReference>
<dbReference type="EMBL" id="AP014959">
    <property type="protein sequence ID" value="BAS82573.1"/>
    <property type="molecule type" value="Genomic_DNA"/>
</dbReference>
<dbReference type="EMBL" id="CM000140">
    <property type="protein sequence ID" value="EEE58421.1"/>
    <property type="molecule type" value="Genomic_DNA"/>
</dbReference>
<dbReference type="EMBL" id="AK109502">
    <property type="protein sequence ID" value="BAG98780.1"/>
    <property type="molecule type" value="mRNA"/>
</dbReference>
<dbReference type="RefSeq" id="XP_015629346.1">
    <property type="nucleotide sequence ID" value="XM_015773860.1"/>
</dbReference>
<dbReference type="FunCoup" id="Q10R09">
    <property type="interactions" value="813"/>
</dbReference>
<dbReference type="STRING" id="39947.Q10R09"/>
<dbReference type="PaxDb" id="39947-Q10R09"/>
<dbReference type="EnsemblPlants" id="Os03t0175800-01">
    <property type="protein sequence ID" value="Os03t0175800-01"/>
    <property type="gene ID" value="Os03g0175800"/>
</dbReference>
<dbReference type="Gramene" id="Os03t0175800-01">
    <property type="protein sequence ID" value="Os03t0175800-01"/>
    <property type="gene ID" value="Os03g0175800"/>
</dbReference>
<dbReference type="KEGG" id="dosa:Os03g0175800"/>
<dbReference type="eggNOG" id="ENOG502QWFY">
    <property type="taxonomic scope" value="Eukaryota"/>
</dbReference>
<dbReference type="HOGENOM" id="CLU_048356_0_0_1"/>
<dbReference type="InParanoid" id="Q10R09"/>
<dbReference type="OMA" id="HYSYYYK"/>
<dbReference type="OrthoDB" id="680041at2759"/>
<dbReference type="Proteomes" id="UP000000763">
    <property type="component" value="Chromosome 3"/>
</dbReference>
<dbReference type="Proteomes" id="UP000007752">
    <property type="component" value="Chromosome 3"/>
</dbReference>
<dbReference type="Proteomes" id="UP000059680">
    <property type="component" value="Chromosome 3"/>
</dbReference>
<dbReference type="GO" id="GO:0005886">
    <property type="term" value="C:plasma membrane"/>
    <property type="evidence" value="ECO:0000314"/>
    <property type="project" value="UniProtKB"/>
</dbReference>
<dbReference type="GO" id="GO:0060918">
    <property type="term" value="P:auxin transport"/>
    <property type="evidence" value="ECO:0000315"/>
    <property type="project" value="UniProtKB"/>
</dbReference>
<dbReference type="GO" id="GO:0009734">
    <property type="term" value="P:auxin-activated signaling pathway"/>
    <property type="evidence" value="ECO:0007669"/>
    <property type="project" value="UniProtKB-KW"/>
</dbReference>
<dbReference type="GO" id="GO:0009630">
    <property type="term" value="P:gravitropism"/>
    <property type="evidence" value="ECO:0000315"/>
    <property type="project" value="UniProtKB"/>
</dbReference>
<dbReference type="GO" id="GO:0010929">
    <property type="term" value="P:positive regulation of auxin mediated signaling pathway"/>
    <property type="evidence" value="ECO:0000315"/>
    <property type="project" value="UniProtKB"/>
</dbReference>
<dbReference type="GO" id="GO:0080113">
    <property type="term" value="P:regulation of seed growth"/>
    <property type="evidence" value="ECO:0000315"/>
    <property type="project" value="UniProtKB"/>
</dbReference>
<dbReference type="GO" id="GO:0009733">
    <property type="term" value="P:response to auxin"/>
    <property type="evidence" value="ECO:0000270"/>
    <property type="project" value="UniProtKB"/>
</dbReference>
<dbReference type="InterPro" id="IPR039621">
    <property type="entry name" value="BG1-like"/>
</dbReference>
<dbReference type="PANTHER" id="PTHR33541:SF28">
    <property type="entry name" value="PROTEIN BIG GRAIN 1-LIKE A"/>
    <property type="match status" value="1"/>
</dbReference>
<dbReference type="PANTHER" id="PTHR33541">
    <property type="entry name" value="PROTEIN BIG GRAIN 1-LIKE A-RELATED"/>
    <property type="match status" value="1"/>
</dbReference>
<keyword id="KW-0927">Auxin signaling pathway</keyword>
<keyword id="KW-1003">Cell membrane</keyword>
<keyword id="KW-0472">Membrane</keyword>
<keyword id="KW-1185">Reference proteome</keyword>
<keyword id="KW-0813">Transport</keyword>
<comment type="function">
    <text evidence="3">Involved in auxin transport. Positive regulator of the auxin signaling pathway involved in gravitropism, plant growth and grain development.</text>
</comment>
<comment type="subcellular location">
    <subcellularLocation>
        <location evidence="3">Cell membrane</location>
    </subcellularLocation>
</comment>
<comment type="tissue specificity">
    <text evidence="3">Mostly expressed in the vascular tissues of leaves, culms and young panicles, especially in hulls.</text>
</comment>
<comment type="induction">
    <text evidence="3">Rapidly induced by auxin (IAA) and analogs, indole-3-butyric acid (IBA) and naphthylacetic acid (NAA). Expression level is gradually decreased as the panicle matures.</text>
</comment>
<comment type="disruption phenotype">
    <text evidence="3">Decreased sensitivity to auxin and N-1-naphthylphthalamic acid, an auxin transport inhibitor. Reduced plant height and decreased panicle length, and grain size and weight. Altered auxin transport.</text>
</comment>
<comment type="biotechnology">
    <text evidence="3">Good candidate to improve plant biomass and grain productivity in various species.</text>
</comment>
<comment type="miscellaneous">
    <text evidence="3">The over-expressing mutants Bg1-D and BG1-OE exhibit increased grain size with both bigger length and width, and associated with longer epidermis cells of both palea and lemma in spikelet hull as well as increases of both number and area of the parenchyma cells in the hull. Some genes associated with cell cycle and cell expansion are up-regulated in the panicles. Enhanced growth of other tissues at both the vegetative and reproductive stages are also observed. Increased sensitivity to auxin (IAA) in terms of root elongation/inhibition, as well as altered IAA distribution and transport.</text>
</comment>
<comment type="similarity">
    <text evidence="5">Belongs to the BIG GRAIN 1 (BG1) plant protein family.</text>
</comment>
<feature type="chain" id="PRO_0000434440" description="Protein BIG GRAIN 1" evidence="1">
    <location>
        <begin position="1"/>
        <end position="310"/>
    </location>
</feature>
<feature type="region of interest" description="Disordered" evidence="2">
    <location>
        <begin position="77"/>
        <end position="140"/>
    </location>
</feature>
<feature type="compositionally biased region" description="Low complexity" evidence="2">
    <location>
        <begin position="90"/>
        <end position="106"/>
    </location>
</feature>
<name>BG1_ORYSJ</name>